<protein>
    <recommendedName>
        <fullName>Glutamyl-tRNA reductase</fullName>
        <shortName>GluTR</shortName>
        <ecNumber>1.2.1.70</ecNumber>
    </recommendedName>
</protein>
<name>HEM1_ECOLI</name>
<sequence>MTLLALGINHKTAPVSLRERVSFSPDKLDQALDSLLAQPMVQGGVVLSTCNRTELYLSVEEQDNLQEALIRWLCDYHNLNEEDLRKSLYWHQDNDAVSHLMRVASGLDSLVLGEPQILGQVKKAFADSQKGHMKASELERMFQKSFSVAKRVRTETDIGASAVSVAFAACTLARQIFESLSTVTVLLVGAGETIELVARHLREHKVQKMIIANRTRERAQILADEVGAEVIALSDIDERLREADIIISSTASPLPIIGKGMVERALKSRRNQPMLLVDIAVPRDVEPEVGKLANAYLYSVDDLQSIISHNLAQRKAAAVEAETIVAQETSEFMAWLRAQSASETIREYRSQAEQVRDELTAKALAALEQGGDAQAIMQDLAWKLTNRLIHAPTKSLQQAARDGDNERLNILRDSLGLE</sequence>
<reference key="1">
    <citation type="journal article" date="1989" name="Gene">
        <title>Cloning and structure of the hem A gene of Escherichia coli K-12.</title>
        <authorList>
            <person name="Li J.-M."/>
            <person name="Russell C.S."/>
            <person name="Cosloy S.D."/>
        </authorList>
    </citation>
    <scope>NUCLEOTIDE SEQUENCE [GENOMIC DNA]</scope>
    <source>
        <strain>K12</strain>
    </source>
</reference>
<reference key="2">
    <citation type="journal article" date="1989" name="J. Bacteriol.">
        <title>Isolation, nucleotide sequence, and preliminary characterization of the Escherichia coli K-12 hemA gene.</title>
        <authorList>
            <person name="Verkamp E."/>
            <person name="Chelm B.K."/>
        </authorList>
    </citation>
    <scope>NUCLEOTIDE SEQUENCE [GENOMIC DNA]</scope>
    <source>
        <strain>K12</strain>
    </source>
</reference>
<reference key="3">
    <citation type="journal article" date="1989" name="Mol. Gen. Genet.">
        <title>Isolation and nucleotide sequence of the hemA gene of Escherichia coli K12.</title>
        <authorList>
            <person name="Drolet M."/>
            <person name="Peloquin L."/>
            <person name="Echelard Y."/>
            <person name="Cousineau L."/>
            <person name="Sasarman A."/>
        </authorList>
    </citation>
    <scope>NUCLEOTIDE SEQUENCE [GENOMIC DNA]</scope>
    <source>
        <strain>K12</strain>
    </source>
</reference>
<reference key="4">
    <citation type="journal article" date="1995" name="J. Bacteriol.">
        <title>Expression of genes kdsA and kdsB involved in 3-deoxy-D-manno-octulosonic acid metabolism and biosynthesis of enterobacterial lipopolysaccharide is growth phase regulated primarily at the transcriptional level in Escherichia coli K-12.</title>
        <authorList>
            <person name="Strohmaier H."/>
            <person name="Remler P."/>
            <person name="Renner W."/>
            <person name="Hoegenauer G."/>
        </authorList>
    </citation>
    <scope>NUCLEOTIDE SEQUENCE [GENOMIC DNA]</scope>
    <source>
        <strain>K12</strain>
    </source>
</reference>
<reference key="5">
    <citation type="journal article" date="1996" name="DNA Res.">
        <title>A 718-kb DNA sequence of the Escherichia coli K-12 genome corresponding to the 12.7-28.0 min region on the linkage map.</title>
        <authorList>
            <person name="Oshima T."/>
            <person name="Aiba H."/>
            <person name="Baba T."/>
            <person name="Fujita K."/>
            <person name="Hayashi K."/>
            <person name="Honjo A."/>
            <person name="Ikemoto K."/>
            <person name="Inada T."/>
            <person name="Itoh T."/>
            <person name="Kajihara M."/>
            <person name="Kanai K."/>
            <person name="Kashimoto K."/>
            <person name="Kimura S."/>
            <person name="Kitagawa M."/>
            <person name="Makino K."/>
            <person name="Masuda S."/>
            <person name="Miki T."/>
            <person name="Mizobuchi K."/>
            <person name="Mori H."/>
            <person name="Motomura K."/>
            <person name="Nakamura Y."/>
            <person name="Nashimoto H."/>
            <person name="Nishio Y."/>
            <person name="Saito N."/>
            <person name="Sampei G."/>
            <person name="Seki Y."/>
            <person name="Tagami H."/>
            <person name="Takemoto K."/>
            <person name="Wada C."/>
            <person name="Yamamoto Y."/>
            <person name="Yano M."/>
            <person name="Horiuchi T."/>
        </authorList>
    </citation>
    <scope>NUCLEOTIDE SEQUENCE [LARGE SCALE GENOMIC DNA]</scope>
    <source>
        <strain>K12 / W3110 / ATCC 27325 / DSM 5911</strain>
    </source>
</reference>
<reference key="6">
    <citation type="journal article" date="1997" name="Science">
        <title>The complete genome sequence of Escherichia coli K-12.</title>
        <authorList>
            <person name="Blattner F.R."/>
            <person name="Plunkett G. III"/>
            <person name="Bloch C.A."/>
            <person name="Perna N.T."/>
            <person name="Burland V."/>
            <person name="Riley M."/>
            <person name="Collado-Vides J."/>
            <person name="Glasner J.D."/>
            <person name="Rode C.K."/>
            <person name="Mayhew G.F."/>
            <person name="Gregor J."/>
            <person name="Davis N.W."/>
            <person name="Kirkpatrick H.A."/>
            <person name="Goeden M.A."/>
            <person name="Rose D.J."/>
            <person name="Mau B."/>
            <person name="Shao Y."/>
        </authorList>
    </citation>
    <scope>NUCLEOTIDE SEQUENCE [LARGE SCALE GENOMIC DNA]</scope>
    <source>
        <strain>K12 / MG1655 / ATCC 47076</strain>
    </source>
</reference>
<reference key="7">
    <citation type="journal article" date="2006" name="Mol. Syst. Biol.">
        <title>Highly accurate genome sequences of Escherichia coli K-12 strains MG1655 and W3110.</title>
        <authorList>
            <person name="Hayashi K."/>
            <person name="Morooka N."/>
            <person name="Yamamoto Y."/>
            <person name="Fujita K."/>
            <person name="Isono K."/>
            <person name="Choi S."/>
            <person name="Ohtsubo E."/>
            <person name="Baba T."/>
            <person name="Wanner B.L."/>
            <person name="Mori H."/>
            <person name="Horiuchi T."/>
        </authorList>
    </citation>
    <scope>NUCLEOTIDE SEQUENCE [LARGE SCALE GENOMIC DNA]</scope>
    <source>
        <strain>K12 / W3110 / ATCC 27325 / DSM 5911</strain>
    </source>
</reference>
<reference key="8">
    <citation type="journal article" date="1992" name="Gene">
        <title>Cloning and characterization of genes involved in the biosynthesis of delta-aminolevulinic acid in Escherichia coli.</title>
        <authorList>
            <person name="Ikemi M."/>
            <person name="Murakami K."/>
            <person name="Hashimoto M."/>
            <person name="Murooka Y."/>
        </authorList>
    </citation>
    <scope>NUCLEOTIDE SEQUENCE [GENOMIC DNA] OF 1-49</scope>
</reference>
<reference key="9">
    <citation type="journal article" date="2002" name="J. Biol. Chem.">
        <title>Escherichia coli glutamyl-tRNA reductase. Trapping the thioester intermediate.</title>
        <authorList>
            <person name="Schauer S."/>
            <person name="Chaturvedi S."/>
            <person name="Randau L."/>
            <person name="Moser J."/>
            <person name="Kitabatake M."/>
            <person name="Lorenz S."/>
            <person name="Verkamp E."/>
            <person name="Schubert W.-D."/>
            <person name="Nakayashiki T."/>
            <person name="Murai M."/>
            <person name="Wall K."/>
            <person name="Thomann H.-U."/>
            <person name="Heinz D.W."/>
            <person name="Inokuchi H."/>
            <person name="Soell D."/>
            <person name="Jahn D."/>
        </authorList>
    </citation>
    <scope>PROTEIN SEQUENCE OF 1-15</scope>
    <scope>FUNCTION</scope>
    <scope>CATALYTIC ACTIVITY</scope>
    <scope>CHARACTERIZATION</scope>
    <scope>ACTIVITY REGULATION</scope>
    <scope>IDENTIFICATION BY MASS SPECTROMETRY</scope>
    <scope>SUBUNIT</scope>
    <scope>KINETIC PARAMETERS</scope>
    <scope>CATALYTIC MECHANISM</scope>
    <scope>MUTAGENESIS OF GLY-7; CYS-50; CYS-74; GLY-106; GLU-114; SER-145; CYS-170; GLY-191 AND ARG-314</scope>
</reference>
<reference key="10">
    <citation type="journal article" date="1992" name="J. Biol. Chem.">
        <title>Glutamyl-tRNA reductase from Escherichia coli and Synechocystis 6803. Gene structure and expression.</title>
        <authorList>
            <person name="Verkamp E."/>
            <person name="Jahn M."/>
            <person name="Jahn D."/>
            <person name="Kumar A.M."/>
            <person name="Soell D."/>
        </authorList>
    </citation>
    <scope>FUNCTION</scope>
</reference>
<reference key="11">
    <citation type="journal article" date="2005" name="J. Biol. Chem.">
        <title>Complex formation between glutamyl-tRNA reductase and glutamate-1-semialdehyde 2,1-aminomutase in Escherichia coli during the initial reactions of porphyrin biosynthesis.</title>
        <authorList>
            <person name="Lueer C."/>
            <person name="Schauer S."/>
            <person name="Moebius K."/>
            <person name="Schulze J."/>
            <person name="Schubert W.-D."/>
            <person name="Heinz D.W."/>
            <person name="Jahn D."/>
            <person name="Moser J."/>
        </authorList>
    </citation>
    <scope>INTERACTION WITH GSA-AM</scope>
</reference>
<reference key="12">
    <citation type="journal article" date="2007" name="FEBS J.">
        <title>Glutamate recognition and hydride transfer by Escherichia coli glutamyl-tRNA reductase.</title>
        <authorList>
            <person name="Lueer C."/>
            <person name="Schauer S."/>
            <person name="Virus S."/>
            <person name="Schubert W.-D."/>
            <person name="Heinz D.W."/>
            <person name="Moser J."/>
            <person name="Jahn D."/>
        </authorList>
    </citation>
    <scope>MUTAGENESIS OF THR-49; ARG-52; GLU-54; HIS-99; SER-109 AND GLN-116</scope>
</reference>
<evidence type="ECO:0000250" key="1"/>
<evidence type="ECO:0000269" key="2">
    <source>
    </source>
</evidence>
<evidence type="ECO:0000269" key="3">
    <source>
    </source>
</evidence>
<evidence type="ECO:0000269" key="4">
    <source>
    </source>
</evidence>
<evidence type="ECO:0000269" key="5">
    <source>
    </source>
</evidence>
<evidence type="ECO:0000305" key="6"/>
<keyword id="KW-0903">Direct protein sequencing</keyword>
<keyword id="KW-0521">NADP</keyword>
<keyword id="KW-0560">Oxidoreductase</keyword>
<keyword id="KW-0627">Porphyrin biosynthesis</keyword>
<keyword id="KW-1185">Reference proteome</keyword>
<proteinExistence type="evidence at protein level"/>
<organism>
    <name type="scientific">Escherichia coli (strain K12)</name>
    <dbReference type="NCBI Taxonomy" id="83333"/>
    <lineage>
        <taxon>Bacteria</taxon>
        <taxon>Pseudomonadati</taxon>
        <taxon>Pseudomonadota</taxon>
        <taxon>Gammaproteobacteria</taxon>
        <taxon>Enterobacterales</taxon>
        <taxon>Enterobacteriaceae</taxon>
        <taxon>Escherichia</taxon>
    </lineage>
</organism>
<comment type="function">
    <text evidence="2 3">Catalyzes the NADPH-dependent reduction of glutamyl-tRNA(Glu) to glutamate 1-semialdehyde (GSA). In the absence of NADPH, exhibits substrate esterase activity, leading to the release of glutamate from tRNA.</text>
</comment>
<comment type="catalytic activity">
    <reaction evidence="2">
        <text>(S)-4-amino-5-oxopentanoate + tRNA(Glu) + NADP(+) = L-glutamyl-tRNA(Glu) + NADPH + H(+)</text>
        <dbReference type="Rhea" id="RHEA:12344"/>
        <dbReference type="Rhea" id="RHEA-COMP:9663"/>
        <dbReference type="Rhea" id="RHEA-COMP:9680"/>
        <dbReference type="ChEBI" id="CHEBI:15378"/>
        <dbReference type="ChEBI" id="CHEBI:57501"/>
        <dbReference type="ChEBI" id="CHEBI:57783"/>
        <dbReference type="ChEBI" id="CHEBI:58349"/>
        <dbReference type="ChEBI" id="CHEBI:78442"/>
        <dbReference type="ChEBI" id="CHEBI:78520"/>
        <dbReference type="EC" id="1.2.1.70"/>
    </reaction>
</comment>
<comment type="activity regulation">
    <text evidence="2">Activated by Mg(2+) ions. Inhibited by metal-chelating agents such as EDTA, EGTA, 1,10-phenanthroline, 2,2'-dipyridyl, and by PtCl4 and KPdCl4 as well as Ni(2+) and Co(2+). Also inhibited by iodoacetamide, N-tosyl-L-phenylalanine chloromethyl ketone, and 5,5'-dithiobis(2-nitrobenzoic acid), as well as glutamycin.</text>
</comment>
<comment type="biophysicochemical properties">
    <kinetics>
        <KM evidence="2">24 uM for L-glutamyl-tRNA(Glu)</KM>
        <KM evidence="2">39 uM for NADPH</KM>
    </kinetics>
</comment>
<comment type="pathway">
    <text>Porphyrin-containing compound metabolism; protoporphyrin-IX biosynthesis; 5-aminolevulinate from L-glutamyl-tRNA(Glu): step 1/2.</text>
</comment>
<comment type="subunit">
    <text evidence="2 4">Homodimer. Interacts with glutamate-1-semialdehyde 2,1-aminomutase (GSA-AM), which forms a metabolic channeling between both enzymes to protect the reactive aldehyde species GSA.</text>
</comment>
<comment type="domain">
    <text evidence="1">Possesses an unusual extended V-shaped dimeric structure with each monomer consisting of three distinct domains arranged along a curved 'spinal' alpha-helix. The N-terminal catalytic domain specifically recognizes the glutamate moiety of the substrate. The second domain is the NADPH-binding domain, and the third C-terminal domain is responsible for dimerization (By similarity).</text>
</comment>
<comment type="miscellaneous">
    <text>During catalysis, the active site Cys acts as a nucleophile attacking the alpha-carbonyl group of tRNA-bound glutamate with the formation of a thioester intermediate between enzyme and glutamate, and the concomitant release of tRNA(Glu). The thioester intermediate is finally reduced by direct hydride transfer from NADPH, to form the product GSA.</text>
</comment>
<comment type="similarity">
    <text evidence="6">Belongs to the glutamyl-tRNA reductase family.</text>
</comment>
<dbReference type="EC" id="1.2.1.70"/>
<dbReference type="EMBL" id="M30785">
    <property type="protein sequence ID" value="AAA23953.1"/>
    <property type="molecule type" value="Genomic_DNA"/>
</dbReference>
<dbReference type="EMBL" id="M25323">
    <property type="protein sequence ID" value="AAA23954.1"/>
    <property type="molecule type" value="Genomic_DNA"/>
</dbReference>
<dbReference type="EMBL" id="X17434">
    <property type="protein sequence ID" value="CAA35476.1"/>
    <property type="molecule type" value="Genomic_DNA"/>
</dbReference>
<dbReference type="EMBL" id="U18555">
    <property type="protein sequence ID" value="AAC43436.1"/>
    <property type="molecule type" value="Genomic_DNA"/>
</dbReference>
<dbReference type="EMBL" id="U00096">
    <property type="protein sequence ID" value="AAC74294.1"/>
    <property type="molecule type" value="Genomic_DNA"/>
</dbReference>
<dbReference type="EMBL" id="AP009048">
    <property type="protein sequence ID" value="BAA36068.1"/>
    <property type="molecule type" value="Genomic_DNA"/>
</dbReference>
<dbReference type="EMBL" id="D10264">
    <property type="protein sequence ID" value="BAA20969.1"/>
    <property type="molecule type" value="Genomic_DNA"/>
</dbReference>
<dbReference type="PIR" id="A45918">
    <property type="entry name" value="BVECHA"/>
</dbReference>
<dbReference type="RefSeq" id="NP_415728.1">
    <property type="nucleotide sequence ID" value="NC_000913.3"/>
</dbReference>
<dbReference type="RefSeq" id="WP_001299679.1">
    <property type="nucleotide sequence ID" value="NZ_SSZK01000010.1"/>
</dbReference>
<dbReference type="SMR" id="P0A6X1"/>
<dbReference type="BioGRID" id="4260816">
    <property type="interactions" value="1"/>
</dbReference>
<dbReference type="DIP" id="DIP-9877N"/>
<dbReference type="FunCoup" id="P0A6X1">
    <property type="interactions" value="485"/>
</dbReference>
<dbReference type="IntAct" id="P0A6X1">
    <property type="interactions" value="1"/>
</dbReference>
<dbReference type="STRING" id="511145.b1210"/>
<dbReference type="ChEMBL" id="CHEMBL3309013"/>
<dbReference type="PaxDb" id="511145-b1210"/>
<dbReference type="EnsemblBacteria" id="AAC74294">
    <property type="protein sequence ID" value="AAC74294"/>
    <property type="gene ID" value="b1210"/>
</dbReference>
<dbReference type="GeneID" id="945777"/>
<dbReference type="KEGG" id="ecj:JW1201"/>
<dbReference type="KEGG" id="eco:b1210"/>
<dbReference type="KEGG" id="ecoc:C3026_07110"/>
<dbReference type="PATRIC" id="fig|1411691.4.peg.1074"/>
<dbReference type="EchoBASE" id="EB0422"/>
<dbReference type="eggNOG" id="COG0373">
    <property type="taxonomic scope" value="Bacteria"/>
</dbReference>
<dbReference type="HOGENOM" id="CLU_035113_2_2_6"/>
<dbReference type="InParanoid" id="P0A6X1"/>
<dbReference type="OMA" id="FAFKCAA"/>
<dbReference type="OrthoDB" id="110209at2"/>
<dbReference type="PhylomeDB" id="P0A6X1"/>
<dbReference type="BioCyc" id="EcoCyc:GLUTRNAREDUCT-MONOMER"/>
<dbReference type="BioCyc" id="MetaCyc:GLUTRNAREDUCT-MONOMER"/>
<dbReference type="BRENDA" id="1.2.1.70">
    <property type="organism ID" value="2026"/>
</dbReference>
<dbReference type="SABIO-RK" id="P0A6X1"/>
<dbReference type="UniPathway" id="UPA00251">
    <property type="reaction ID" value="UER00316"/>
</dbReference>
<dbReference type="PRO" id="PR:P0A6X1"/>
<dbReference type="Proteomes" id="UP000000625">
    <property type="component" value="Chromosome"/>
</dbReference>
<dbReference type="GO" id="GO:0008883">
    <property type="term" value="F:glutamyl-tRNA reductase activity"/>
    <property type="evidence" value="ECO:0000314"/>
    <property type="project" value="EcoCyc"/>
</dbReference>
<dbReference type="GO" id="GO:0042802">
    <property type="term" value="F:identical protein binding"/>
    <property type="evidence" value="ECO:0000314"/>
    <property type="project" value="EcoCyc"/>
</dbReference>
<dbReference type="GO" id="GO:0050661">
    <property type="term" value="F:NADP binding"/>
    <property type="evidence" value="ECO:0007669"/>
    <property type="project" value="InterPro"/>
</dbReference>
<dbReference type="GO" id="GO:0019353">
    <property type="term" value="P:protoporphyrinogen IX biosynthetic process from glutamate"/>
    <property type="evidence" value="ECO:0000314"/>
    <property type="project" value="EcoCyc"/>
</dbReference>
<dbReference type="CDD" id="cd05213">
    <property type="entry name" value="NAD_bind_Glutamyl_tRNA_reduct"/>
    <property type="match status" value="1"/>
</dbReference>
<dbReference type="FunFam" id="3.30.460.30:FF:000001">
    <property type="entry name" value="Glutamyl-tRNA reductase"/>
    <property type="match status" value="1"/>
</dbReference>
<dbReference type="FunFam" id="3.40.50.720:FF:000031">
    <property type="entry name" value="Glutamyl-tRNA reductase"/>
    <property type="match status" value="1"/>
</dbReference>
<dbReference type="Gene3D" id="3.30.460.30">
    <property type="entry name" value="Glutamyl-tRNA reductase, N-terminal domain"/>
    <property type="match status" value="1"/>
</dbReference>
<dbReference type="Gene3D" id="3.40.50.720">
    <property type="entry name" value="NAD(P)-binding Rossmann-like Domain"/>
    <property type="match status" value="1"/>
</dbReference>
<dbReference type="HAMAP" id="MF_00087">
    <property type="entry name" value="Glu_tRNA_reductase"/>
    <property type="match status" value="1"/>
</dbReference>
<dbReference type="InterPro" id="IPR000343">
    <property type="entry name" value="4pyrrol_synth_GluRdtase"/>
</dbReference>
<dbReference type="InterPro" id="IPR015896">
    <property type="entry name" value="4pyrrol_synth_GluRdtase_dimer"/>
</dbReference>
<dbReference type="InterPro" id="IPR015895">
    <property type="entry name" value="4pyrrol_synth_GluRdtase_N"/>
</dbReference>
<dbReference type="InterPro" id="IPR018214">
    <property type="entry name" value="GluRdtase_CS"/>
</dbReference>
<dbReference type="InterPro" id="IPR036453">
    <property type="entry name" value="GluRdtase_dimer_dom_sf"/>
</dbReference>
<dbReference type="InterPro" id="IPR036343">
    <property type="entry name" value="GluRdtase_N_sf"/>
</dbReference>
<dbReference type="InterPro" id="IPR036291">
    <property type="entry name" value="NAD(P)-bd_dom_sf"/>
</dbReference>
<dbReference type="InterPro" id="IPR006151">
    <property type="entry name" value="Shikm_DH/Glu-tRNA_Rdtase"/>
</dbReference>
<dbReference type="NCBIfam" id="TIGR01035">
    <property type="entry name" value="hemA"/>
    <property type="match status" value="1"/>
</dbReference>
<dbReference type="PANTHER" id="PTHR43013">
    <property type="entry name" value="GLUTAMYL-TRNA REDUCTASE"/>
    <property type="match status" value="1"/>
</dbReference>
<dbReference type="PANTHER" id="PTHR43013:SF1">
    <property type="entry name" value="GLUTAMYL-TRNA REDUCTASE"/>
    <property type="match status" value="1"/>
</dbReference>
<dbReference type="Pfam" id="PF00745">
    <property type="entry name" value="GlutR_dimer"/>
    <property type="match status" value="1"/>
</dbReference>
<dbReference type="Pfam" id="PF05201">
    <property type="entry name" value="GlutR_N"/>
    <property type="match status" value="1"/>
</dbReference>
<dbReference type="Pfam" id="PF01488">
    <property type="entry name" value="Shikimate_DH"/>
    <property type="match status" value="1"/>
</dbReference>
<dbReference type="PIRSF" id="PIRSF000445">
    <property type="entry name" value="4pyrrol_synth_GluRdtase"/>
    <property type="match status" value="1"/>
</dbReference>
<dbReference type="SUPFAM" id="SSF69742">
    <property type="entry name" value="Glutamyl tRNA-reductase catalytic, N-terminal domain"/>
    <property type="match status" value="1"/>
</dbReference>
<dbReference type="SUPFAM" id="SSF69075">
    <property type="entry name" value="Glutamyl tRNA-reductase dimerization domain"/>
    <property type="match status" value="1"/>
</dbReference>
<dbReference type="SUPFAM" id="SSF51735">
    <property type="entry name" value="NAD(P)-binding Rossmann-fold domains"/>
    <property type="match status" value="1"/>
</dbReference>
<dbReference type="PROSITE" id="PS00747">
    <property type="entry name" value="GLUTR"/>
    <property type="match status" value="1"/>
</dbReference>
<feature type="chain" id="PRO_0000114023" description="Glutamyl-tRNA reductase">
    <location>
        <begin position="1"/>
        <end position="418"/>
    </location>
</feature>
<feature type="active site" description="Nucleophile">
    <location>
        <position position="50"/>
    </location>
</feature>
<feature type="binding site" evidence="6">
    <location>
        <begin position="49"/>
        <end position="52"/>
    </location>
    <ligand>
        <name>substrate</name>
    </ligand>
</feature>
<feature type="binding site" evidence="6">
    <location>
        <position position="109"/>
    </location>
    <ligand>
        <name>substrate</name>
    </ligand>
</feature>
<feature type="binding site" evidence="6">
    <location>
        <begin position="114"/>
        <end position="116"/>
    </location>
    <ligand>
        <name>substrate</name>
    </ligand>
</feature>
<feature type="binding site" evidence="1">
    <location>
        <position position="120"/>
    </location>
    <ligand>
        <name>substrate</name>
    </ligand>
</feature>
<feature type="binding site" evidence="6">
    <location>
        <begin position="189"/>
        <end position="194"/>
    </location>
    <ligand>
        <name>NADP(+)</name>
        <dbReference type="ChEBI" id="CHEBI:58349"/>
    </ligand>
</feature>
<feature type="site" description="Important for activity">
    <location>
        <position position="99"/>
    </location>
</feature>
<feature type="mutagenesis site" description="Loss of activity." evidence="2">
    <original>G</original>
    <variation>D</variation>
    <location>
        <position position="7"/>
    </location>
</feature>
<feature type="mutagenesis site" description="10% and 5% of wild-type reductase and esterase activity, respectively." evidence="5">
    <original>T</original>
    <variation>V</variation>
    <location>
        <position position="49"/>
    </location>
</feature>
<feature type="mutagenesis site" description="Loss of activity." evidence="2">
    <original>C</original>
    <variation>S</variation>
    <location>
        <position position="50"/>
    </location>
</feature>
<feature type="mutagenesis site" description="5% and 4% of wild-type reductase and esterase activity, respectively." evidence="5">
    <original>R</original>
    <variation>K</variation>
    <location>
        <position position="52"/>
    </location>
</feature>
<feature type="mutagenesis site" description="Loss of activity." evidence="5">
    <original>R</original>
    <variation>Q</variation>
    <location>
        <position position="52"/>
    </location>
</feature>
<feature type="mutagenesis site" description="6% and 2% of wild-type reductase and esterase activity, respectively." evidence="5">
    <original>E</original>
    <variation>K</variation>
    <location>
        <position position="54"/>
    </location>
</feature>
<feature type="mutagenesis site" description="No effect." evidence="2">
    <original>C</original>
    <variation>S</variation>
    <location>
        <position position="74"/>
    </location>
</feature>
<feature type="mutagenesis site" description="5% and 4% of wild-type reductase and esterase activity, respectively." evidence="5">
    <original>H</original>
    <variation>N</variation>
    <location>
        <position position="99"/>
    </location>
</feature>
<feature type="mutagenesis site" description="Loss of activity." evidence="2">
    <original>G</original>
    <variation>N</variation>
    <location>
        <position position="106"/>
    </location>
</feature>
<feature type="mutagenesis site" description="28% and 25% of wild-type reductase and esterase activity, respectively." evidence="5">
    <original>S</original>
    <variation>A</variation>
    <location>
        <position position="109"/>
    </location>
</feature>
<feature type="mutagenesis site" description="Loss of activity." evidence="2">
    <original>E</original>
    <variation>K</variation>
    <location>
        <position position="114"/>
    </location>
</feature>
<feature type="mutagenesis site" description="Loss of reductase activity. 30% of wild-type esterase activity." evidence="5">
    <original>Q</original>
    <variation>L</variation>
    <location>
        <position position="116"/>
    </location>
</feature>
<feature type="mutagenesis site" description="Loss of activity." evidence="2">
    <original>S</original>
    <variation>F</variation>
    <location>
        <position position="145"/>
    </location>
</feature>
<feature type="mutagenesis site" description="No effect." evidence="2">
    <original>C</original>
    <variation>S</variation>
    <location>
        <position position="170"/>
    </location>
</feature>
<feature type="mutagenesis site" description="Loss of reductase activity. Retains esterase activity." evidence="2">
    <original>G</original>
    <variation>D</variation>
    <location>
        <position position="191"/>
    </location>
</feature>
<feature type="mutagenesis site" description="Loss of activity." evidence="2">
    <original>R</original>
    <variation>C</variation>
    <location>
        <position position="314"/>
    </location>
</feature>
<feature type="sequence conflict" description="In Ref. 3; CAA35476." evidence="6" ref="3">
    <original>RVRTETDIGASAVSVAFA</original>
    <variation>PFALKQISVPALCLSLLP</variation>
    <location>
        <begin position="151"/>
        <end position="168"/>
    </location>
</feature>
<feature type="sequence conflict" description="In Ref. 3; CAA35476." evidence="6" ref="3">
    <original>L</original>
    <variation>V</variation>
    <location>
        <position position="172"/>
    </location>
</feature>
<feature type="sequence conflict" description="In Ref. 3; CAA35476." evidence="6" ref="3">
    <original>L</original>
    <variation>M</variation>
    <location>
        <position position="240"/>
    </location>
</feature>
<feature type="sequence conflict" description="In Ref. 1 and 4." evidence="6" ref="1 4">
    <original>A</original>
    <variation>R</variation>
    <location>
        <position position="243"/>
    </location>
</feature>
<feature type="sequence conflict" description="In Ref. 3; CAA35476." evidence="6" ref="3">
    <original>A</original>
    <variation>R</variation>
    <location>
        <position position="365"/>
    </location>
</feature>
<gene>
    <name type="primary">hemA</name>
    <name type="ordered locus">b1210</name>
    <name type="ordered locus">JW1201</name>
</gene>
<accession>P0A6X1</accession>
<accession>P13580</accession>
<accession>Q59405</accession>